<sequence>EEGWVPGPSLISLQMRVTPKLMRLAWDGFPLHYSEKHGWGYLVPGRQDNLPAASAEPEGPVCPHRAIERLYRQHCLQRGQEQPPEEAGVEDELMVLEGSSMWQKVEELSQLELDMERPGRAEQSQMQDEDGLPELVEESSQPSFHHGNGPYNDVNIPGCWFFKLPHKDGNENNVGSPFAKDFLPRMEDGTLRAAVGRTHGTRALEINKMVSFWRNAHKRVSSQVVVWLKKGELPRAVTRHPAYSEEEDYGAILPQVVTAGTITRRAVEPTWLTASNARADRVGSELKAMVQVPPGYSLVGADVDSQELWIAAVLGEAHFAGMHGCTAFGWMTLQGKKSDGTDLHSKTAATVGISREHAKVFNYGRIYGAGQPFAERLLMQFNHRLTQQQAREKAQQMYAVTKGIRRFHLSEEGEWLVKELELAVDKAEDGTVSAQDVQKIQREAMRKSRRKKKWDVVAHRMWAGGTESEMFNKLESIALSASPQTPVLGCHISRALEPAVAKGEFLTSRVNWVVQSSAVDYLHLMLVSMKWLFEEYDINGRFCISIHDEVRYLVQEQDRYRAALALQITNLLTRCMFAYKLGLQDLPQSVAFFSAVDIDRCLRKEVTMNCATPSNPTGMEKKYGIPRGEALDIYQIIEITKGSLEKK</sequence>
<organism>
    <name type="scientific">Gallus gallus</name>
    <name type="common">Chicken</name>
    <dbReference type="NCBI Taxonomy" id="9031"/>
    <lineage>
        <taxon>Eukaryota</taxon>
        <taxon>Metazoa</taxon>
        <taxon>Chordata</taxon>
        <taxon>Craniata</taxon>
        <taxon>Vertebrata</taxon>
        <taxon>Euteleostomi</taxon>
        <taxon>Archelosauria</taxon>
        <taxon>Archosauria</taxon>
        <taxon>Dinosauria</taxon>
        <taxon>Saurischia</taxon>
        <taxon>Theropoda</taxon>
        <taxon>Coelurosauria</taxon>
        <taxon>Aves</taxon>
        <taxon>Neognathae</taxon>
        <taxon>Galloanserae</taxon>
        <taxon>Galliformes</taxon>
        <taxon>Phasianidae</taxon>
        <taxon>Phasianinae</taxon>
        <taxon>Gallus</taxon>
    </lineage>
</organism>
<reference key="1">
    <citation type="journal article" date="1996" name="Genomics">
        <title>Cloning and characterization of the human mitochondrial DNA polymerase, DNA polymerase gamma.</title>
        <authorList>
            <person name="Ropp P.A."/>
            <person name="Copeland W.C."/>
        </authorList>
    </citation>
    <scope>NUCLEOTIDE SEQUENCE [MRNA]</scope>
</reference>
<keyword id="KW-0235">DNA replication</keyword>
<keyword id="KW-0238">DNA-binding</keyword>
<keyword id="KW-0239">DNA-directed DNA polymerase</keyword>
<keyword id="KW-0460">Magnesium</keyword>
<keyword id="KW-0496">Mitochondrion</keyword>
<keyword id="KW-1135">Mitochondrion nucleoid</keyword>
<keyword id="KW-0548">Nucleotidyltransferase</keyword>
<keyword id="KW-1185">Reference proteome</keyword>
<keyword id="KW-0808">Transferase</keyword>
<dbReference type="EC" id="2.7.7.7"/>
<dbReference type="EMBL" id="U60297">
    <property type="protein sequence ID" value="AAC60018.1"/>
    <property type="molecule type" value="mRNA"/>
</dbReference>
<dbReference type="SMR" id="Q92076"/>
<dbReference type="FunCoup" id="Q92076">
    <property type="interactions" value="406"/>
</dbReference>
<dbReference type="STRING" id="9031.ENSGALP00000062000"/>
<dbReference type="PaxDb" id="9031-ENSGALP00000037807"/>
<dbReference type="VEuPathDB" id="HostDB:geneid_404292"/>
<dbReference type="eggNOG" id="KOG3657">
    <property type="taxonomic scope" value="Eukaryota"/>
</dbReference>
<dbReference type="InParanoid" id="Q92076"/>
<dbReference type="OrthoDB" id="5588663at2759"/>
<dbReference type="PhylomeDB" id="Q92076"/>
<dbReference type="Proteomes" id="UP000000539">
    <property type="component" value="Unassembled WGS sequence"/>
</dbReference>
<dbReference type="GO" id="GO:0005760">
    <property type="term" value="C:gamma DNA polymerase complex"/>
    <property type="evidence" value="ECO:0007669"/>
    <property type="project" value="InterPro"/>
</dbReference>
<dbReference type="GO" id="GO:0042645">
    <property type="term" value="C:mitochondrial nucleoid"/>
    <property type="evidence" value="ECO:0000250"/>
    <property type="project" value="UniProtKB"/>
</dbReference>
<dbReference type="GO" id="GO:0005739">
    <property type="term" value="C:mitochondrion"/>
    <property type="evidence" value="ECO:0000318"/>
    <property type="project" value="GO_Central"/>
</dbReference>
<dbReference type="GO" id="GO:0008408">
    <property type="term" value="F:3'-5' exonuclease activity"/>
    <property type="evidence" value="ECO:0000318"/>
    <property type="project" value="GO_Central"/>
</dbReference>
<dbReference type="GO" id="GO:0003682">
    <property type="term" value="F:chromatin binding"/>
    <property type="evidence" value="ECO:0000250"/>
    <property type="project" value="UniProtKB"/>
</dbReference>
<dbReference type="GO" id="GO:0003677">
    <property type="term" value="F:DNA binding"/>
    <property type="evidence" value="ECO:0007669"/>
    <property type="project" value="UniProtKB-KW"/>
</dbReference>
<dbReference type="GO" id="GO:0003887">
    <property type="term" value="F:DNA-directed DNA polymerase activity"/>
    <property type="evidence" value="ECO:0000314"/>
    <property type="project" value="AgBase"/>
</dbReference>
<dbReference type="GO" id="GO:0000731">
    <property type="term" value="P:DNA synthesis involved in DNA repair"/>
    <property type="evidence" value="ECO:0000314"/>
    <property type="project" value="AgBase"/>
</dbReference>
<dbReference type="GO" id="GO:0006261">
    <property type="term" value="P:DNA-templated DNA replication"/>
    <property type="evidence" value="ECO:0000314"/>
    <property type="project" value="AgBase"/>
</dbReference>
<dbReference type="GO" id="GO:0006298">
    <property type="term" value="P:mismatch repair"/>
    <property type="evidence" value="ECO:0000314"/>
    <property type="project" value="AgBase"/>
</dbReference>
<dbReference type="GO" id="GO:0006264">
    <property type="term" value="P:mitochondrial DNA replication"/>
    <property type="evidence" value="ECO:0000318"/>
    <property type="project" value="GO_Central"/>
</dbReference>
<dbReference type="CDD" id="cd08641">
    <property type="entry name" value="DNA_pol_gammaA"/>
    <property type="match status" value="1"/>
</dbReference>
<dbReference type="FunFam" id="1.10.150.20:FF:000024">
    <property type="entry name" value="DNA polymerase gamma, catalytic subunit"/>
    <property type="match status" value="1"/>
</dbReference>
<dbReference type="Gene3D" id="3.30.70.370">
    <property type="match status" value="1"/>
</dbReference>
<dbReference type="Gene3D" id="1.10.150.20">
    <property type="entry name" value="5' to 3' exonuclease, C-terminal subdomain"/>
    <property type="match status" value="1"/>
</dbReference>
<dbReference type="InterPro" id="IPR019760">
    <property type="entry name" value="DNA-dir_DNA_pol_A_CS"/>
</dbReference>
<dbReference type="InterPro" id="IPR002297">
    <property type="entry name" value="DNA-dir_DNA_pol_A_mt"/>
</dbReference>
<dbReference type="InterPro" id="IPR001098">
    <property type="entry name" value="DNA-dir_DNA_pol_A_palm_dom"/>
</dbReference>
<dbReference type="InterPro" id="IPR043502">
    <property type="entry name" value="DNA/RNA_pol_sf"/>
</dbReference>
<dbReference type="InterPro" id="IPR047580">
    <property type="entry name" value="POLG_palm_dom"/>
</dbReference>
<dbReference type="PANTHER" id="PTHR10267">
    <property type="entry name" value="DNA POLYMERASE SUBUNIT GAMMA-1"/>
    <property type="match status" value="1"/>
</dbReference>
<dbReference type="PANTHER" id="PTHR10267:SF0">
    <property type="entry name" value="DNA POLYMERASE SUBUNIT GAMMA-1"/>
    <property type="match status" value="1"/>
</dbReference>
<dbReference type="PRINTS" id="PR00867">
    <property type="entry name" value="DNAPOLG"/>
</dbReference>
<dbReference type="SMART" id="SM00482">
    <property type="entry name" value="POLAc"/>
    <property type="match status" value="1"/>
</dbReference>
<dbReference type="SUPFAM" id="SSF56672">
    <property type="entry name" value="DNA/RNA polymerases"/>
    <property type="match status" value="1"/>
</dbReference>
<dbReference type="PROSITE" id="PS00447">
    <property type="entry name" value="DNA_POLYMERASE_A"/>
    <property type="match status" value="1"/>
</dbReference>
<evidence type="ECO:0000250" key="1"/>
<evidence type="ECO:0000250" key="2">
    <source>
        <dbReference type="UniProtKB" id="P54098"/>
    </source>
</evidence>
<evidence type="ECO:0000250" key="3">
    <source>
        <dbReference type="UniProtKB" id="Q27607"/>
    </source>
</evidence>
<evidence type="ECO:0000256" key="4">
    <source>
        <dbReference type="SAM" id="MobiDB-lite"/>
    </source>
</evidence>
<evidence type="ECO:0000305" key="5"/>
<accession>Q92076</accession>
<protein>
    <recommendedName>
        <fullName>DNA polymerase subunit gamma-1</fullName>
        <ecNumber>2.7.7.7</ecNumber>
    </recommendedName>
    <alternativeName>
        <fullName>Mitochondrial DNA polymerase catalytic subunit</fullName>
    </alternativeName>
</protein>
<feature type="chain" id="PRO_0000101273" description="DNA polymerase subunit gamma-1">
    <location>
        <begin position="1" status="less than"/>
        <end position="647"/>
    </location>
</feature>
<feature type="region of interest" description="Disordered" evidence="4">
    <location>
        <begin position="116"/>
        <end position="147"/>
    </location>
</feature>
<feature type="compositionally biased region" description="Acidic residues" evidence="4">
    <location>
        <begin position="127"/>
        <end position="137"/>
    </location>
</feature>
<feature type="non-terminal residue">
    <location>
        <position position="1"/>
    </location>
</feature>
<comment type="function">
    <text evidence="1">Involved in the replication of mitochondrial DNA. Associates with mitochondrial DNA (By similarity).</text>
</comment>
<comment type="catalytic activity">
    <reaction>
        <text>DNA(n) + a 2'-deoxyribonucleoside 5'-triphosphate = DNA(n+1) + diphosphate</text>
        <dbReference type="Rhea" id="RHEA:22508"/>
        <dbReference type="Rhea" id="RHEA-COMP:17339"/>
        <dbReference type="Rhea" id="RHEA-COMP:17340"/>
        <dbReference type="ChEBI" id="CHEBI:33019"/>
        <dbReference type="ChEBI" id="CHEBI:61560"/>
        <dbReference type="ChEBI" id="CHEBI:173112"/>
        <dbReference type="EC" id="2.7.7.7"/>
    </reaction>
</comment>
<comment type="cofactor">
    <cofactor>
        <name>Mg(2+)</name>
        <dbReference type="ChEBI" id="CHEBI:18420"/>
    </cofactor>
</comment>
<comment type="subunit">
    <text evidence="2 3">Heterotrimer composed of a catalytic subunit and a homodimer of accessory subunits (By similarity). Interacts with TTC3 (By similarity).</text>
</comment>
<comment type="subcellular location">
    <subcellularLocation>
        <location>Mitochondrion</location>
    </subcellularLocation>
    <subcellularLocation>
        <location evidence="1">Mitochondrion matrix</location>
        <location evidence="1">Mitochondrion nucleoid</location>
    </subcellularLocation>
</comment>
<comment type="similarity">
    <text evidence="5">Belongs to the DNA polymerase type-A family.</text>
</comment>
<proteinExistence type="evidence at transcript level"/>
<name>DPOG1_CHICK</name>
<gene>
    <name type="primary">POLG</name>
    <name type="synonym">POLG1</name>
</gene>